<feature type="chain" id="PRO_1000130107" description="Protein-arginine kinase">
    <location>
        <begin position="1"/>
        <end position="354"/>
    </location>
</feature>
<feature type="domain" description="Phosphagen kinase C-terminal" evidence="1">
    <location>
        <begin position="24"/>
        <end position="254"/>
    </location>
</feature>
<feature type="short sequence motif" description="RDXXRA motif of the pArg binding pocket involved in allosteric regulation" evidence="1">
    <location>
        <begin position="337"/>
        <end position="342"/>
    </location>
</feature>
<feature type="binding site" evidence="1">
    <location>
        <begin position="27"/>
        <end position="31"/>
    </location>
    <ligand>
        <name>ATP</name>
        <dbReference type="ChEBI" id="CHEBI:30616"/>
    </ligand>
</feature>
<feature type="binding site" evidence="1">
    <location>
        <position position="92"/>
    </location>
    <ligand>
        <name>ATP</name>
        <dbReference type="ChEBI" id="CHEBI:30616"/>
    </ligand>
</feature>
<feature type="binding site" evidence="1">
    <location>
        <position position="125"/>
    </location>
    <ligand>
        <name>ATP</name>
        <dbReference type="ChEBI" id="CHEBI:30616"/>
    </ligand>
</feature>
<feature type="binding site" evidence="1">
    <location>
        <begin position="176"/>
        <end position="180"/>
    </location>
    <ligand>
        <name>ATP</name>
        <dbReference type="ChEBI" id="CHEBI:30616"/>
    </ligand>
</feature>
<feature type="binding site" evidence="1">
    <location>
        <begin position="207"/>
        <end position="212"/>
    </location>
    <ligand>
        <name>ATP</name>
        <dbReference type="ChEBI" id="CHEBI:30616"/>
    </ligand>
</feature>
<keyword id="KW-0021">Allosteric enzyme</keyword>
<keyword id="KW-0067">ATP-binding</keyword>
<keyword id="KW-0418">Kinase</keyword>
<keyword id="KW-0547">Nucleotide-binding</keyword>
<keyword id="KW-0808">Transferase</keyword>
<accession>B7ISZ0</accession>
<comment type="function">
    <text evidence="1">Catalyzes the specific phosphorylation of arginine residues in a large number of proteins. Is part of the bacterial stress response system. Protein arginine phosphorylation has a physiologically important role and is involved in the regulation of many critical cellular processes, such as protein homeostasis, motility, competence, and stringent and stress responses, by regulating gene expression and protein activity.</text>
</comment>
<comment type="catalytic activity">
    <reaction evidence="1">
        <text>L-arginyl-[protein] + ATP = N(omega)-phospho-L-arginyl-[protein] + ADP + H(+)</text>
        <dbReference type="Rhea" id="RHEA:43384"/>
        <dbReference type="Rhea" id="RHEA-COMP:10532"/>
        <dbReference type="Rhea" id="RHEA-COMP:10533"/>
        <dbReference type="ChEBI" id="CHEBI:15378"/>
        <dbReference type="ChEBI" id="CHEBI:29965"/>
        <dbReference type="ChEBI" id="CHEBI:30616"/>
        <dbReference type="ChEBI" id="CHEBI:83226"/>
        <dbReference type="ChEBI" id="CHEBI:456216"/>
        <dbReference type="EC" id="2.7.14.1"/>
    </reaction>
</comment>
<comment type="activity regulation">
    <text evidence="1">Appears to be allosterically activated by the binding of pArg-containing polypeptides to the pArg-binding pocket localized in the C-terminal domain of McsB.</text>
</comment>
<comment type="similarity">
    <text evidence="1">Belongs to the ATP:guanido phosphotransferase family.</text>
</comment>
<reference key="1">
    <citation type="submission" date="2008-10" db="EMBL/GenBank/DDBJ databases">
        <title>Genome sequence of Bacillus cereus G9842.</title>
        <authorList>
            <person name="Dodson R.J."/>
            <person name="Durkin A.S."/>
            <person name="Rosovitz M.J."/>
            <person name="Rasko D.A."/>
            <person name="Hoffmaster A."/>
            <person name="Ravel J."/>
            <person name="Sutton G."/>
        </authorList>
    </citation>
    <scope>NUCLEOTIDE SEQUENCE [LARGE SCALE GENOMIC DNA]</scope>
    <source>
        <strain>G9842</strain>
    </source>
</reference>
<dbReference type="EC" id="2.7.14.1" evidence="1"/>
<dbReference type="EMBL" id="CP001186">
    <property type="protein sequence ID" value="ACK96473.1"/>
    <property type="molecule type" value="Genomic_DNA"/>
</dbReference>
<dbReference type="RefSeq" id="WP_000050838.1">
    <property type="nucleotide sequence ID" value="NC_011772.1"/>
</dbReference>
<dbReference type="SMR" id="B7ISZ0"/>
<dbReference type="KEGG" id="bcg:BCG9842_B5225"/>
<dbReference type="HOGENOM" id="CLU_066591_1_0_9"/>
<dbReference type="Proteomes" id="UP000006744">
    <property type="component" value="Chromosome"/>
</dbReference>
<dbReference type="GO" id="GO:0005615">
    <property type="term" value="C:extracellular space"/>
    <property type="evidence" value="ECO:0007669"/>
    <property type="project" value="TreeGrafter"/>
</dbReference>
<dbReference type="GO" id="GO:0005524">
    <property type="term" value="F:ATP binding"/>
    <property type="evidence" value="ECO:0007669"/>
    <property type="project" value="UniProtKB-KW"/>
</dbReference>
<dbReference type="GO" id="GO:0004111">
    <property type="term" value="F:creatine kinase activity"/>
    <property type="evidence" value="ECO:0007669"/>
    <property type="project" value="InterPro"/>
</dbReference>
<dbReference type="GO" id="GO:0004672">
    <property type="term" value="F:protein kinase activity"/>
    <property type="evidence" value="ECO:0007669"/>
    <property type="project" value="UniProtKB-UniRule"/>
</dbReference>
<dbReference type="GO" id="GO:0046314">
    <property type="term" value="P:phosphocreatine biosynthetic process"/>
    <property type="evidence" value="ECO:0007669"/>
    <property type="project" value="InterPro"/>
</dbReference>
<dbReference type="CDD" id="cd07930">
    <property type="entry name" value="bacterial_phosphagen_kinase"/>
    <property type="match status" value="1"/>
</dbReference>
<dbReference type="FunFam" id="3.30.590.10:FF:000007">
    <property type="entry name" value="Protein-arginine kinase"/>
    <property type="match status" value="1"/>
</dbReference>
<dbReference type="Gene3D" id="3.30.590.10">
    <property type="entry name" value="Glutamine synthetase/guanido kinase, catalytic domain"/>
    <property type="match status" value="1"/>
</dbReference>
<dbReference type="HAMAP" id="MF_00602">
    <property type="entry name" value="Prot_Arg_kinase"/>
    <property type="match status" value="1"/>
</dbReference>
<dbReference type="InterPro" id="IPR023660">
    <property type="entry name" value="Arg_Kinase"/>
</dbReference>
<dbReference type="InterPro" id="IPR000749">
    <property type="entry name" value="ATP-guanido_PTrfase"/>
</dbReference>
<dbReference type="InterPro" id="IPR022415">
    <property type="entry name" value="ATP-guanido_PTrfase_AS"/>
</dbReference>
<dbReference type="InterPro" id="IPR022414">
    <property type="entry name" value="ATP-guanido_PTrfase_cat"/>
</dbReference>
<dbReference type="InterPro" id="IPR014746">
    <property type="entry name" value="Gln_synth/guanido_kin_cat_dom"/>
</dbReference>
<dbReference type="NCBIfam" id="NF002194">
    <property type="entry name" value="PRK01059.1-4"/>
    <property type="match status" value="1"/>
</dbReference>
<dbReference type="NCBIfam" id="NF002195">
    <property type="entry name" value="PRK01059.1-5"/>
    <property type="match status" value="1"/>
</dbReference>
<dbReference type="PANTHER" id="PTHR11547:SF38">
    <property type="entry name" value="ARGININE KINASE 1-RELATED"/>
    <property type="match status" value="1"/>
</dbReference>
<dbReference type="PANTHER" id="PTHR11547">
    <property type="entry name" value="ARGININE OR CREATINE KINASE"/>
    <property type="match status" value="1"/>
</dbReference>
<dbReference type="Pfam" id="PF00217">
    <property type="entry name" value="ATP-gua_Ptrans"/>
    <property type="match status" value="1"/>
</dbReference>
<dbReference type="SUPFAM" id="SSF55931">
    <property type="entry name" value="Glutamine synthetase/guanido kinase"/>
    <property type="match status" value="1"/>
</dbReference>
<dbReference type="PROSITE" id="PS00112">
    <property type="entry name" value="PHOSPHAGEN_KINASE"/>
    <property type="match status" value="1"/>
</dbReference>
<dbReference type="PROSITE" id="PS51510">
    <property type="entry name" value="PHOSPHAGEN_KINASE_C"/>
    <property type="match status" value="1"/>
</dbReference>
<protein>
    <recommendedName>
        <fullName evidence="1">Protein-arginine kinase</fullName>
        <ecNumber evidence="1">2.7.14.1</ecNumber>
    </recommendedName>
</protein>
<gene>
    <name evidence="1" type="primary">mcsB</name>
    <name type="ordered locus">BCG9842_B5225</name>
</gene>
<sequence>MSLDKIMNEAISPWMKGDGPDSDIVLSSRIRLARNFKQYQFSTMQNEEEAKQIHELFKKKFINKAVGSFGEFGLLKMNELTPLQRRVLVEKHLISPNLAGTEYGACLLSESEHISVMLNEEDHIRIQCLFSGLQLSEALQSANQIDNWIEKEVEYAFDESLGYITSCPTNVGTGLRASVMIHLPGLVLTKRISRIIQVIQKLGLVVRGIYGEGSEALGNIFQVSNQMTLGKSEEDIIADLKSVIQQIIQQEKMARELIVQNSSIELEDKVYRSYGILANSRLIQSAEAANCLSDVRLGIDLGYIKGISRNILTELMVLTQPGILQQYAGGPLGPEERDYRRATLIRERLSIEKN</sequence>
<name>MCSB_BACC2</name>
<organism>
    <name type="scientific">Bacillus cereus (strain G9842)</name>
    <dbReference type="NCBI Taxonomy" id="405531"/>
    <lineage>
        <taxon>Bacteria</taxon>
        <taxon>Bacillati</taxon>
        <taxon>Bacillota</taxon>
        <taxon>Bacilli</taxon>
        <taxon>Bacillales</taxon>
        <taxon>Bacillaceae</taxon>
        <taxon>Bacillus</taxon>
        <taxon>Bacillus cereus group</taxon>
    </lineage>
</organism>
<proteinExistence type="inferred from homology"/>
<evidence type="ECO:0000255" key="1">
    <source>
        <dbReference type="HAMAP-Rule" id="MF_00602"/>
    </source>
</evidence>